<gene>
    <name type="primary">FBA1</name>
    <name type="ordered locus">KLLA0E07546g</name>
</gene>
<feature type="chain" id="PRO_0000178758" description="Fructose-bisphosphate aldolase">
    <location>
        <begin position="1"/>
        <end position="361"/>
    </location>
</feature>
<feature type="active site" description="Proton donor" evidence="1">
    <location>
        <position position="110"/>
    </location>
</feature>
<feature type="binding site" evidence="1">
    <location>
        <position position="63"/>
    </location>
    <ligand>
        <name>D-glyceraldehyde 3-phosphate</name>
        <dbReference type="ChEBI" id="CHEBI:59776"/>
    </ligand>
</feature>
<feature type="binding site" evidence="1">
    <location>
        <position position="111"/>
    </location>
    <ligand>
        <name>Zn(2+)</name>
        <dbReference type="ChEBI" id="CHEBI:29105"/>
        <label>1</label>
        <note>catalytic</note>
    </ligand>
</feature>
<feature type="binding site" evidence="1">
    <location>
        <position position="145"/>
    </location>
    <ligand>
        <name>Zn(2+)</name>
        <dbReference type="ChEBI" id="CHEBI:29105"/>
        <label>2</label>
    </ligand>
</feature>
<feature type="binding site" evidence="1">
    <location>
        <position position="175"/>
    </location>
    <ligand>
        <name>Zn(2+)</name>
        <dbReference type="ChEBI" id="CHEBI:29105"/>
        <label>2</label>
    </ligand>
</feature>
<feature type="binding site" evidence="1">
    <location>
        <position position="227"/>
    </location>
    <ligand>
        <name>Zn(2+)</name>
        <dbReference type="ChEBI" id="CHEBI:29105"/>
        <label>1</label>
        <note>catalytic</note>
    </ligand>
</feature>
<feature type="binding site" evidence="1">
    <location>
        <position position="228"/>
    </location>
    <ligand>
        <name>dihydroxyacetone phosphate</name>
        <dbReference type="ChEBI" id="CHEBI:57642"/>
    </ligand>
</feature>
<feature type="binding site" evidence="1">
    <location>
        <position position="266"/>
    </location>
    <ligand>
        <name>Zn(2+)</name>
        <dbReference type="ChEBI" id="CHEBI:29105"/>
        <label>1</label>
        <note>catalytic</note>
    </ligand>
</feature>
<feature type="binding site" evidence="1">
    <location>
        <begin position="267"/>
        <end position="269"/>
    </location>
    <ligand>
        <name>dihydroxyacetone phosphate</name>
        <dbReference type="ChEBI" id="CHEBI:57642"/>
    </ligand>
</feature>
<feature type="binding site" evidence="1">
    <location>
        <begin position="288"/>
        <end position="291"/>
    </location>
    <ligand>
        <name>dihydroxyacetone phosphate</name>
        <dbReference type="ChEBI" id="CHEBI:57642"/>
    </ligand>
</feature>
<sequence>MPAQDVLTRKTGVIVGDDVKALFDYAKEHKFAIPAINVTSSSTVVAALEAARDNKSPIILQTSNGGAAYFAGKGVSNEGQNASIRGSIAAAHYIRSIAPAYGIPVVLHTDHCAKKLLPWFDGMLKADEEYFAKHGEPLFSSHMLDLSEETDEENIGLCVKYFTRMAKIHQWLEMEIGITGGEEDGVNNEGTSNDKLYTTPETVFSVHEALSKISPNFSIASAFGNVHGVYKIAAALKPELLGTFQDYAAKQLNKKAEDKPLYLVFHGGSGSSTKDFHTAIDFGVVKVNLDTDCQFAYLSGIRDYVLNKKDYLMTPVGNPTGEDSPNKKYYDPRVWVREGEKTMSKRITQALEIFRTKGALE</sequence>
<accession>Q9C2U0</accession>
<name>ALF_KLULA</name>
<dbReference type="EC" id="4.1.2.13"/>
<dbReference type="EMBL" id="AJ272114">
    <property type="protein sequence ID" value="CAC29023.2"/>
    <property type="molecule type" value="Genomic_DNA"/>
</dbReference>
<dbReference type="EMBL" id="CR382125">
    <property type="protein sequence ID" value="CAG99377.1"/>
    <property type="molecule type" value="Genomic_DNA"/>
</dbReference>
<dbReference type="RefSeq" id="XP_454290.1">
    <property type="nucleotide sequence ID" value="XM_454290.1"/>
</dbReference>
<dbReference type="SMR" id="Q9C2U0"/>
<dbReference type="FunCoup" id="Q9C2U0">
    <property type="interactions" value="848"/>
</dbReference>
<dbReference type="STRING" id="284590.Q9C2U0"/>
<dbReference type="PaxDb" id="284590-Q9C2U0"/>
<dbReference type="KEGG" id="kla:KLLA0_E07569g"/>
<dbReference type="eggNOG" id="KOG4153">
    <property type="taxonomic scope" value="Eukaryota"/>
</dbReference>
<dbReference type="HOGENOM" id="CLU_036923_0_0_1"/>
<dbReference type="InParanoid" id="Q9C2U0"/>
<dbReference type="OMA" id="PRTWGKL"/>
<dbReference type="UniPathway" id="UPA00109">
    <property type="reaction ID" value="UER00183"/>
</dbReference>
<dbReference type="Proteomes" id="UP000000598">
    <property type="component" value="Chromosome E"/>
</dbReference>
<dbReference type="GO" id="GO:0005829">
    <property type="term" value="C:cytosol"/>
    <property type="evidence" value="ECO:0007669"/>
    <property type="project" value="TreeGrafter"/>
</dbReference>
<dbReference type="GO" id="GO:0004332">
    <property type="term" value="F:fructose-bisphosphate aldolase activity"/>
    <property type="evidence" value="ECO:0007669"/>
    <property type="project" value="UniProtKB-EC"/>
</dbReference>
<dbReference type="GO" id="GO:0008270">
    <property type="term" value="F:zinc ion binding"/>
    <property type="evidence" value="ECO:0007669"/>
    <property type="project" value="InterPro"/>
</dbReference>
<dbReference type="GO" id="GO:0006094">
    <property type="term" value="P:gluconeogenesis"/>
    <property type="evidence" value="ECO:0007669"/>
    <property type="project" value="TreeGrafter"/>
</dbReference>
<dbReference type="GO" id="GO:0006096">
    <property type="term" value="P:glycolytic process"/>
    <property type="evidence" value="ECO:0007669"/>
    <property type="project" value="UniProtKB-UniPathway"/>
</dbReference>
<dbReference type="CDD" id="cd00946">
    <property type="entry name" value="FBP_aldolase_IIA"/>
    <property type="match status" value="1"/>
</dbReference>
<dbReference type="FunFam" id="3.20.20.70:FF:000013">
    <property type="entry name" value="Class II fructose-bisphosphate aldolase"/>
    <property type="match status" value="1"/>
</dbReference>
<dbReference type="Gene3D" id="3.20.20.70">
    <property type="entry name" value="Aldolase class I"/>
    <property type="match status" value="1"/>
</dbReference>
<dbReference type="InterPro" id="IPR013785">
    <property type="entry name" value="Aldolase_TIM"/>
</dbReference>
<dbReference type="InterPro" id="IPR000771">
    <property type="entry name" value="FBA_II"/>
</dbReference>
<dbReference type="InterPro" id="IPR006411">
    <property type="entry name" value="Fruct_bisP_bact"/>
</dbReference>
<dbReference type="NCBIfam" id="TIGR00167">
    <property type="entry name" value="cbbA"/>
    <property type="match status" value="1"/>
</dbReference>
<dbReference type="NCBIfam" id="TIGR01520">
    <property type="entry name" value="FruBisAldo_II_A"/>
    <property type="match status" value="1"/>
</dbReference>
<dbReference type="NCBIfam" id="NF006628">
    <property type="entry name" value="PRK09197.1"/>
    <property type="match status" value="1"/>
</dbReference>
<dbReference type="PANTHER" id="PTHR30559:SF0">
    <property type="entry name" value="FRUCTOSE-BISPHOSPHATE ALDOLASE"/>
    <property type="match status" value="1"/>
</dbReference>
<dbReference type="PANTHER" id="PTHR30559">
    <property type="entry name" value="FRUCTOSE-BISPHOSPHATE ALDOLASE CLASS 2"/>
    <property type="match status" value="1"/>
</dbReference>
<dbReference type="Pfam" id="PF01116">
    <property type="entry name" value="F_bP_aldolase"/>
    <property type="match status" value="1"/>
</dbReference>
<dbReference type="PIRSF" id="PIRSF001359">
    <property type="entry name" value="F_bP_aldolase_II"/>
    <property type="match status" value="1"/>
</dbReference>
<dbReference type="SUPFAM" id="SSF51569">
    <property type="entry name" value="Aldolase"/>
    <property type="match status" value="1"/>
</dbReference>
<dbReference type="PROSITE" id="PS00602">
    <property type="entry name" value="ALDOLASE_CLASS_II_1"/>
    <property type="match status" value="1"/>
</dbReference>
<dbReference type="PROSITE" id="PS00806">
    <property type="entry name" value="ALDOLASE_CLASS_II_2"/>
    <property type="match status" value="1"/>
</dbReference>
<comment type="function">
    <text evidence="1">Catalyzes the aldol condensation of dihydroxyacetone phosphate (DHAP or glycerone-phosphate) with glyceraldehyde 3-phosphate (G3P) to form fructose 1,6-bisphosphate (FBP) in gluconeogenesis and the reverse reaction in glycolysis.</text>
</comment>
<comment type="catalytic activity">
    <reaction>
        <text>beta-D-fructose 1,6-bisphosphate = D-glyceraldehyde 3-phosphate + dihydroxyacetone phosphate</text>
        <dbReference type="Rhea" id="RHEA:14729"/>
        <dbReference type="ChEBI" id="CHEBI:32966"/>
        <dbReference type="ChEBI" id="CHEBI:57642"/>
        <dbReference type="ChEBI" id="CHEBI:59776"/>
        <dbReference type="EC" id="4.1.2.13"/>
    </reaction>
</comment>
<comment type="cofactor">
    <cofactor evidence="1">
        <name>Zn(2+)</name>
        <dbReference type="ChEBI" id="CHEBI:29105"/>
    </cofactor>
    <text evidence="1">Binds 2 Zn(2+) ions per subunit. One is catalytic and the other provides a structural contribution.</text>
</comment>
<comment type="pathway">
    <text>Carbohydrate degradation; glycolysis; D-glyceraldehyde 3-phosphate and glycerone phosphate from D-glucose: step 4/4.</text>
</comment>
<comment type="subunit">
    <text evidence="1">Homodimer.</text>
</comment>
<comment type="similarity">
    <text evidence="2">Belongs to the class II fructose-bisphosphate aldolase family.</text>
</comment>
<protein>
    <recommendedName>
        <fullName>Fructose-bisphosphate aldolase</fullName>
        <shortName>FBP aldolase</shortName>
        <shortName>FBPA</shortName>
        <ecNumber>4.1.2.13</ecNumber>
    </recommendedName>
    <alternativeName>
        <fullName>Fructose-1,6-bisphosphate aldolase</fullName>
    </alternativeName>
</protein>
<reference key="1">
    <citation type="journal article" date="2004" name="Can. J. Microbiol.">
        <title>Isolation and transcriptional regulation of the Kluyveromyces lactis FBA1 (fructose-1,6-bisphosphate aldolase) gene.</title>
        <authorList>
            <person name="Diaz Prado S.M."/>
            <person name="Cerdan M.E."/>
            <person name="Gonzalez Siso M.I."/>
        </authorList>
    </citation>
    <scope>NUCLEOTIDE SEQUENCE [GENOMIC DNA]</scope>
    <source>
        <strain>ATCC 8585 / CBS 2359 / DSM 70799 / NBRC 1267 / NRRL Y-1140 / WM37</strain>
    </source>
</reference>
<reference key="2">
    <citation type="journal article" date="2004" name="Nature">
        <title>Genome evolution in yeasts.</title>
        <authorList>
            <person name="Dujon B."/>
            <person name="Sherman D."/>
            <person name="Fischer G."/>
            <person name="Durrens P."/>
            <person name="Casaregola S."/>
            <person name="Lafontaine I."/>
            <person name="de Montigny J."/>
            <person name="Marck C."/>
            <person name="Neuveglise C."/>
            <person name="Talla E."/>
            <person name="Goffard N."/>
            <person name="Frangeul L."/>
            <person name="Aigle M."/>
            <person name="Anthouard V."/>
            <person name="Babour A."/>
            <person name="Barbe V."/>
            <person name="Barnay S."/>
            <person name="Blanchin S."/>
            <person name="Beckerich J.-M."/>
            <person name="Beyne E."/>
            <person name="Bleykasten C."/>
            <person name="Boisrame A."/>
            <person name="Boyer J."/>
            <person name="Cattolico L."/>
            <person name="Confanioleri F."/>
            <person name="de Daruvar A."/>
            <person name="Despons L."/>
            <person name="Fabre E."/>
            <person name="Fairhead C."/>
            <person name="Ferry-Dumazet H."/>
            <person name="Groppi A."/>
            <person name="Hantraye F."/>
            <person name="Hennequin C."/>
            <person name="Jauniaux N."/>
            <person name="Joyet P."/>
            <person name="Kachouri R."/>
            <person name="Kerrest A."/>
            <person name="Koszul R."/>
            <person name="Lemaire M."/>
            <person name="Lesur I."/>
            <person name="Ma L."/>
            <person name="Muller H."/>
            <person name="Nicaud J.-M."/>
            <person name="Nikolski M."/>
            <person name="Oztas S."/>
            <person name="Ozier-Kalogeropoulos O."/>
            <person name="Pellenz S."/>
            <person name="Potier S."/>
            <person name="Richard G.-F."/>
            <person name="Straub M.-L."/>
            <person name="Suleau A."/>
            <person name="Swennen D."/>
            <person name="Tekaia F."/>
            <person name="Wesolowski-Louvel M."/>
            <person name="Westhof E."/>
            <person name="Wirth B."/>
            <person name="Zeniou-Meyer M."/>
            <person name="Zivanovic Y."/>
            <person name="Bolotin-Fukuhara M."/>
            <person name="Thierry A."/>
            <person name="Bouchier C."/>
            <person name="Caudron B."/>
            <person name="Scarpelli C."/>
            <person name="Gaillardin C."/>
            <person name="Weissenbach J."/>
            <person name="Wincker P."/>
            <person name="Souciet J.-L."/>
        </authorList>
    </citation>
    <scope>NUCLEOTIDE SEQUENCE [LARGE SCALE GENOMIC DNA]</scope>
    <source>
        <strain>ATCC 8585 / CBS 2359 / DSM 70799 / NBRC 1267 / NRRL Y-1140 / WM37</strain>
    </source>
</reference>
<evidence type="ECO:0000250" key="1"/>
<evidence type="ECO:0000305" key="2"/>
<proteinExistence type="inferred from homology"/>
<organism>
    <name type="scientific">Kluyveromyces lactis (strain ATCC 8585 / CBS 2359 / DSM 70799 / NBRC 1267 / NRRL Y-1140 / WM37)</name>
    <name type="common">Yeast</name>
    <name type="synonym">Candida sphaerica</name>
    <dbReference type="NCBI Taxonomy" id="284590"/>
    <lineage>
        <taxon>Eukaryota</taxon>
        <taxon>Fungi</taxon>
        <taxon>Dikarya</taxon>
        <taxon>Ascomycota</taxon>
        <taxon>Saccharomycotina</taxon>
        <taxon>Saccharomycetes</taxon>
        <taxon>Saccharomycetales</taxon>
        <taxon>Saccharomycetaceae</taxon>
        <taxon>Kluyveromyces</taxon>
    </lineage>
</organism>
<keyword id="KW-0324">Glycolysis</keyword>
<keyword id="KW-0456">Lyase</keyword>
<keyword id="KW-0479">Metal-binding</keyword>
<keyword id="KW-1185">Reference proteome</keyword>
<keyword id="KW-0862">Zinc</keyword>